<gene>
    <name type="primary">SSU72</name>
    <name type="ordered locus">CNBD4490</name>
</gene>
<evidence type="ECO:0000250" key="1"/>
<evidence type="ECO:0000305" key="2"/>
<reference key="1">
    <citation type="journal article" date="2005" name="Science">
        <title>The genome of the basidiomycetous yeast and human pathogen Cryptococcus neoformans.</title>
        <authorList>
            <person name="Loftus B.J."/>
            <person name="Fung E."/>
            <person name="Roncaglia P."/>
            <person name="Rowley D."/>
            <person name="Amedeo P."/>
            <person name="Bruno D."/>
            <person name="Vamathevan J."/>
            <person name="Miranda M."/>
            <person name="Anderson I.J."/>
            <person name="Fraser J.A."/>
            <person name="Allen J.E."/>
            <person name="Bosdet I.E."/>
            <person name="Brent M.R."/>
            <person name="Chiu R."/>
            <person name="Doering T.L."/>
            <person name="Donlin M.J."/>
            <person name="D'Souza C.A."/>
            <person name="Fox D.S."/>
            <person name="Grinberg V."/>
            <person name="Fu J."/>
            <person name="Fukushima M."/>
            <person name="Haas B.J."/>
            <person name="Huang J.C."/>
            <person name="Janbon G."/>
            <person name="Jones S.J.M."/>
            <person name="Koo H.L."/>
            <person name="Krzywinski M.I."/>
            <person name="Kwon-Chung K.J."/>
            <person name="Lengeler K.B."/>
            <person name="Maiti R."/>
            <person name="Marra M.A."/>
            <person name="Marra R.E."/>
            <person name="Mathewson C.A."/>
            <person name="Mitchell T.G."/>
            <person name="Pertea M."/>
            <person name="Riggs F.R."/>
            <person name="Salzberg S.L."/>
            <person name="Schein J.E."/>
            <person name="Shvartsbeyn A."/>
            <person name="Shin H."/>
            <person name="Shumway M."/>
            <person name="Specht C.A."/>
            <person name="Suh B.B."/>
            <person name="Tenney A."/>
            <person name="Utterback T.R."/>
            <person name="Wickes B.L."/>
            <person name="Wortman J.R."/>
            <person name="Wye N.H."/>
            <person name="Kronstad J.W."/>
            <person name="Lodge J.K."/>
            <person name="Heitman J."/>
            <person name="Davis R.W."/>
            <person name="Fraser C.M."/>
            <person name="Hyman R.W."/>
        </authorList>
    </citation>
    <scope>NUCLEOTIDE SEQUENCE [LARGE SCALE GENOMIC DNA]</scope>
    <source>
        <strain>B-3501A</strain>
    </source>
</reference>
<protein>
    <recommendedName>
        <fullName>RNA polymerase II subunit A C-terminal domain phosphatase SSU72</fullName>
        <shortName>CTD phosphatase SSU72</shortName>
        <ecNumber>3.1.3.16</ecNumber>
    </recommendedName>
    <alternativeName>
        <fullName>Suppressor of SUA7 protein 2 homolog</fullName>
    </alternativeName>
</protein>
<keyword id="KW-0378">Hydrolase</keyword>
<keyword id="KW-0507">mRNA processing</keyword>
<keyword id="KW-0539">Nucleus</keyword>
<keyword id="KW-0904">Protein phosphatase</keyword>
<name>SSU72_CRYNB</name>
<comment type="function">
    <text evidence="1">Processively dephosphorylates Ser-5 of the heptad repeats YSPTSPS in the C-terminal domain of the largest RNA polymerase II subunit (RPB1).</text>
</comment>
<comment type="function">
    <text evidence="1">Component of the cleavage and polyadenylation factor (CPF) complex, which plays a key role in polyadenylation-dependent pre-mRNA 3'-end formation and cooperates with cleavage factors including the CFIA complex and NAB4/CFIB. SSU72 is required for 3'-end formation of snoRNAs (By similarity).</text>
</comment>
<comment type="catalytic activity">
    <reaction>
        <text>O-phospho-L-seryl-[protein] + H2O = L-seryl-[protein] + phosphate</text>
        <dbReference type="Rhea" id="RHEA:20629"/>
        <dbReference type="Rhea" id="RHEA-COMP:9863"/>
        <dbReference type="Rhea" id="RHEA-COMP:11604"/>
        <dbReference type="ChEBI" id="CHEBI:15377"/>
        <dbReference type="ChEBI" id="CHEBI:29999"/>
        <dbReference type="ChEBI" id="CHEBI:43474"/>
        <dbReference type="ChEBI" id="CHEBI:83421"/>
        <dbReference type="EC" id="3.1.3.16"/>
    </reaction>
</comment>
<comment type="catalytic activity">
    <reaction>
        <text>O-phospho-L-threonyl-[protein] + H2O = L-threonyl-[protein] + phosphate</text>
        <dbReference type="Rhea" id="RHEA:47004"/>
        <dbReference type="Rhea" id="RHEA-COMP:11060"/>
        <dbReference type="Rhea" id="RHEA-COMP:11605"/>
        <dbReference type="ChEBI" id="CHEBI:15377"/>
        <dbReference type="ChEBI" id="CHEBI:30013"/>
        <dbReference type="ChEBI" id="CHEBI:43474"/>
        <dbReference type="ChEBI" id="CHEBI:61977"/>
        <dbReference type="EC" id="3.1.3.16"/>
    </reaction>
</comment>
<comment type="subunit">
    <text evidence="1">Component of the cleavage and polyadenylation factor (CPF) complex.</text>
</comment>
<comment type="subcellular location">
    <subcellularLocation>
        <location evidence="1">Nucleus</location>
    </subcellularLocation>
</comment>
<comment type="similarity">
    <text evidence="2">Belongs to the SSU72 phosphatase family.</text>
</comment>
<comment type="sequence caution" evidence="2">
    <conflict type="erroneous gene model prediction">
        <sequence resource="EMBL-CDS" id="EAL21073"/>
    </conflict>
</comment>
<organism>
    <name type="scientific">Cryptococcus neoformans var. neoformans serotype D (strain B-3501A)</name>
    <name type="common">Filobasidiella neoformans</name>
    <dbReference type="NCBI Taxonomy" id="283643"/>
    <lineage>
        <taxon>Eukaryota</taxon>
        <taxon>Fungi</taxon>
        <taxon>Dikarya</taxon>
        <taxon>Basidiomycota</taxon>
        <taxon>Agaricomycotina</taxon>
        <taxon>Tremellomycetes</taxon>
        <taxon>Tremellales</taxon>
        <taxon>Cryptococcaceae</taxon>
        <taxon>Cryptococcus</taxon>
        <taxon>Cryptococcus neoformans species complex</taxon>
    </lineage>
</organism>
<dbReference type="EC" id="3.1.3.16"/>
<dbReference type="EMBL" id="AAEY01000021">
    <property type="protein sequence ID" value="EAL21073.1"/>
    <property type="status" value="ALT_SEQ"/>
    <property type="molecule type" value="Genomic_DNA"/>
</dbReference>
<dbReference type="RefSeq" id="XP_775720.1">
    <property type="nucleotide sequence ID" value="XM_770627.1"/>
</dbReference>
<dbReference type="SMR" id="P0CR77"/>
<dbReference type="GeneID" id="4935838"/>
<dbReference type="KEGG" id="cnb:CNBD4490"/>
<dbReference type="HOGENOM" id="CLU_062463_1_0_1"/>
<dbReference type="OrthoDB" id="1410at5206"/>
<dbReference type="GO" id="GO:0005634">
    <property type="term" value="C:nucleus"/>
    <property type="evidence" value="ECO:0007669"/>
    <property type="project" value="UniProtKB-SubCell"/>
</dbReference>
<dbReference type="GO" id="GO:0004722">
    <property type="term" value="F:protein serine/threonine phosphatase activity"/>
    <property type="evidence" value="ECO:0007669"/>
    <property type="project" value="UniProtKB-EC"/>
</dbReference>
<dbReference type="GO" id="GO:0006397">
    <property type="term" value="P:mRNA processing"/>
    <property type="evidence" value="ECO:0007669"/>
    <property type="project" value="UniProtKB-KW"/>
</dbReference>
<dbReference type="FunFam" id="3.40.50.2300:FF:000066">
    <property type="entry name" value="RNA polymerase II subunit A C-terminal domain phosphatase SSU72"/>
    <property type="match status" value="1"/>
</dbReference>
<dbReference type="Gene3D" id="3.40.50.2300">
    <property type="match status" value="1"/>
</dbReference>
<dbReference type="InterPro" id="IPR006811">
    <property type="entry name" value="RNA_pol_II_suA"/>
</dbReference>
<dbReference type="PANTHER" id="PTHR20383">
    <property type="entry name" value="RNA POLYMERASE II SUBUNIT A C-TERMINAL DOMAIN PHOSPHATASE"/>
    <property type="match status" value="1"/>
</dbReference>
<dbReference type="Pfam" id="PF04722">
    <property type="entry name" value="Ssu72"/>
    <property type="match status" value="1"/>
</dbReference>
<proteinExistence type="inferred from homology"/>
<sequence length="187" mass="21310">MCHKVEEDRYFVWFVRAITKNSFRVVSAGTGSAVRLPGPAIDKPNVYRFGTPYDDIYRDLESQDPQLYTRNGILPMLDRNRKVKKAPEKWQELKSVLADVVITCEERCYDAVCDDLLTRSGEYNRPIHIINIEIKDNPEEAHIAGQSILELARAIEASDDLDSDIDAILNAHGDKHPHTLLHTVGFY</sequence>
<feature type="chain" id="PRO_0000410300" description="RNA polymerase II subunit A C-terminal domain phosphatase SSU72">
    <location>
        <begin position="1"/>
        <end position="187"/>
    </location>
</feature>
<accession>P0CR77</accession>
<accession>Q55TK4</accession>
<accession>Q5KIT2</accession>